<keyword id="KW-1185">Reference proteome</keyword>
<keyword id="KW-0687">Ribonucleoprotein</keyword>
<keyword id="KW-0689">Ribosomal protein</keyword>
<evidence type="ECO:0000255" key="1">
    <source>
        <dbReference type="HAMAP-Rule" id="MF_00373"/>
    </source>
</evidence>
<evidence type="ECO:0000305" key="2"/>
<reference key="1">
    <citation type="journal article" date="2008" name="J. Bacteriol.">
        <title>The genome of Heliobacterium modesticaldum, a phototrophic representative of the Firmicutes containing the simplest photosynthetic apparatus.</title>
        <authorList>
            <person name="Sattley W.M."/>
            <person name="Madigan M.T."/>
            <person name="Swingley W.D."/>
            <person name="Cheung P.C."/>
            <person name="Clocksin K.M."/>
            <person name="Conrad A.L."/>
            <person name="Dejesa L.C."/>
            <person name="Honchak B.M."/>
            <person name="Jung D.O."/>
            <person name="Karbach L.E."/>
            <person name="Kurdoglu A."/>
            <person name="Lahiri S."/>
            <person name="Mastrian S.D."/>
            <person name="Page L.E."/>
            <person name="Taylor H.L."/>
            <person name="Wang Z.T."/>
            <person name="Raymond J."/>
            <person name="Chen M."/>
            <person name="Blankenship R.E."/>
            <person name="Touchman J.W."/>
        </authorList>
    </citation>
    <scope>NUCLEOTIDE SEQUENCE [LARGE SCALE GENOMIC DNA]</scope>
    <source>
        <strain>ATCC 51547 / Ice1</strain>
    </source>
</reference>
<sequence length="63" mass="7032">MARKCAICGKGVQMGMQVSHSHIRTKRTWSPNLQRVRAVVKGAPVRLNVCTRCLRSGKVQRSV</sequence>
<protein>
    <recommendedName>
        <fullName evidence="1">Large ribosomal subunit protein bL28</fullName>
    </recommendedName>
    <alternativeName>
        <fullName evidence="2">50S ribosomal protein L28</fullName>
    </alternativeName>
</protein>
<proteinExistence type="inferred from homology"/>
<gene>
    <name evidence="1" type="primary">rpmB</name>
    <name type="ordered locus">Helmi_20780</name>
    <name type="ORF">HM1_2147</name>
</gene>
<organism>
    <name type="scientific">Heliobacterium modesticaldum (strain ATCC 51547 / Ice1)</name>
    <dbReference type="NCBI Taxonomy" id="498761"/>
    <lineage>
        <taxon>Bacteria</taxon>
        <taxon>Bacillati</taxon>
        <taxon>Bacillota</taxon>
        <taxon>Clostridia</taxon>
        <taxon>Eubacteriales</taxon>
        <taxon>Heliobacteriaceae</taxon>
        <taxon>Heliomicrobium</taxon>
    </lineage>
</organism>
<name>RL28_HELMI</name>
<dbReference type="EMBL" id="CP000930">
    <property type="protein sequence ID" value="ABZ84703.1"/>
    <property type="molecule type" value="Genomic_DNA"/>
</dbReference>
<dbReference type="RefSeq" id="WP_012283203.1">
    <property type="nucleotide sequence ID" value="NC_010337.2"/>
</dbReference>
<dbReference type="SMR" id="B0TGU2"/>
<dbReference type="STRING" id="498761.HM1_2147"/>
<dbReference type="KEGG" id="hmo:HM1_2147"/>
<dbReference type="eggNOG" id="COG0227">
    <property type="taxonomic scope" value="Bacteria"/>
</dbReference>
<dbReference type="HOGENOM" id="CLU_064548_7_0_9"/>
<dbReference type="OrthoDB" id="9805609at2"/>
<dbReference type="Proteomes" id="UP000008550">
    <property type="component" value="Chromosome"/>
</dbReference>
<dbReference type="GO" id="GO:1990904">
    <property type="term" value="C:ribonucleoprotein complex"/>
    <property type="evidence" value="ECO:0007669"/>
    <property type="project" value="UniProtKB-KW"/>
</dbReference>
<dbReference type="GO" id="GO:0005840">
    <property type="term" value="C:ribosome"/>
    <property type="evidence" value="ECO:0007669"/>
    <property type="project" value="UniProtKB-KW"/>
</dbReference>
<dbReference type="GO" id="GO:0003735">
    <property type="term" value="F:structural constituent of ribosome"/>
    <property type="evidence" value="ECO:0007669"/>
    <property type="project" value="InterPro"/>
</dbReference>
<dbReference type="GO" id="GO:0006412">
    <property type="term" value="P:translation"/>
    <property type="evidence" value="ECO:0007669"/>
    <property type="project" value="UniProtKB-UniRule"/>
</dbReference>
<dbReference type="Gene3D" id="2.30.170.40">
    <property type="entry name" value="Ribosomal protein L28/L24"/>
    <property type="match status" value="1"/>
</dbReference>
<dbReference type="HAMAP" id="MF_00373">
    <property type="entry name" value="Ribosomal_bL28"/>
    <property type="match status" value="1"/>
</dbReference>
<dbReference type="InterPro" id="IPR050096">
    <property type="entry name" value="Bacterial_rp_bL28"/>
</dbReference>
<dbReference type="InterPro" id="IPR026569">
    <property type="entry name" value="Ribosomal_bL28"/>
</dbReference>
<dbReference type="InterPro" id="IPR034704">
    <property type="entry name" value="Ribosomal_bL28/bL31-like_sf"/>
</dbReference>
<dbReference type="InterPro" id="IPR001383">
    <property type="entry name" value="Ribosomal_bL28_bact-type"/>
</dbReference>
<dbReference type="InterPro" id="IPR037147">
    <property type="entry name" value="Ribosomal_bL28_sf"/>
</dbReference>
<dbReference type="NCBIfam" id="TIGR00009">
    <property type="entry name" value="L28"/>
    <property type="match status" value="1"/>
</dbReference>
<dbReference type="PANTHER" id="PTHR39080">
    <property type="entry name" value="50S RIBOSOMAL PROTEIN L28"/>
    <property type="match status" value="1"/>
</dbReference>
<dbReference type="PANTHER" id="PTHR39080:SF1">
    <property type="entry name" value="LARGE RIBOSOMAL SUBUNIT PROTEIN BL28A"/>
    <property type="match status" value="1"/>
</dbReference>
<dbReference type="Pfam" id="PF00830">
    <property type="entry name" value="Ribosomal_L28"/>
    <property type="match status" value="1"/>
</dbReference>
<dbReference type="SUPFAM" id="SSF143800">
    <property type="entry name" value="L28p-like"/>
    <property type="match status" value="1"/>
</dbReference>
<feature type="chain" id="PRO_1000121641" description="Large ribosomal subunit protein bL28">
    <location>
        <begin position="1"/>
        <end position="63"/>
    </location>
</feature>
<accession>B0TGU2</accession>
<comment type="similarity">
    <text evidence="1">Belongs to the bacterial ribosomal protein bL28 family.</text>
</comment>